<evidence type="ECO:0000255" key="1">
    <source>
        <dbReference type="HAMAP-Rule" id="MF_01456"/>
    </source>
</evidence>
<feature type="chain" id="PRO_0000390093" description="NADH-quinone oxidoreductase subunit K">
    <location>
        <begin position="1"/>
        <end position="100"/>
    </location>
</feature>
<feature type="transmembrane region" description="Helical" evidence="1">
    <location>
        <begin position="1"/>
        <end position="21"/>
    </location>
</feature>
<feature type="transmembrane region" description="Helical" evidence="1">
    <location>
        <begin position="28"/>
        <end position="48"/>
    </location>
</feature>
<feature type="transmembrane region" description="Helical" evidence="1">
    <location>
        <begin position="64"/>
        <end position="84"/>
    </location>
</feature>
<keyword id="KW-0997">Cell inner membrane</keyword>
<keyword id="KW-1003">Cell membrane</keyword>
<keyword id="KW-0472">Membrane</keyword>
<keyword id="KW-0520">NAD</keyword>
<keyword id="KW-0874">Quinone</keyword>
<keyword id="KW-1185">Reference proteome</keyword>
<keyword id="KW-1278">Translocase</keyword>
<keyword id="KW-0812">Transmembrane</keyword>
<keyword id="KW-1133">Transmembrane helix</keyword>
<keyword id="KW-0813">Transport</keyword>
<keyword id="KW-0830">Ubiquinone</keyword>
<reference key="1">
    <citation type="journal article" date="2009" name="J. Bacteriol.">
        <title>The complete genome sequence of Helicobacter pylori strain G27.</title>
        <authorList>
            <person name="Baltrus D.A."/>
            <person name="Amieva M.R."/>
            <person name="Covacci A."/>
            <person name="Lowe T.M."/>
            <person name="Merrell D.S."/>
            <person name="Ottemann K.M."/>
            <person name="Stein M."/>
            <person name="Salama N.R."/>
            <person name="Guillemin K."/>
        </authorList>
    </citation>
    <scope>NUCLEOTIDE SEQUENCE [LARGE SCALE GENOMIC DNA]</scope>
    <source>
        <strain>G27</strain>
    </source>
</reference>
<proteinExistence type="inferred from homology"/>
<protein>
    <recommendedName>
        <fullName evidence="1">NADH-quinone oxidoreductase subunit K</fullName>
        <ecNumber evidence="1">7.1.1.-</ecNumber>
    </recommendedName>
    <alternativeName>
        <fullName evidence="1">NADH dehydrogenase I subunit K</fullName>
    </alternativeName>
    <alternativeName>
        <fullName evidence="1">NDH-1 subunit K</fullName>
    </alternativeName>
</protein>
<gene>
    <name evidence="1" type="primary">nuoK</name>
    <name type="ordered locus">HPG27_1215</name>
</gene>
<organism>
    <name type="scientific">Helicobacter pylori (strain G27)</name>
    <dbReference type="NCBI Taxonomy" id="563041"/>
    <lineage>
        <taxon>Bacteria</taxon>
        <taxon>Pseudomonadati</taxon>
        <taxon>Campylobacterota</taxon>
        <taxon>Epsilonproteobacteria</taxon>
        <taxon>Campylobacterales</taxon>
        <taxon>Helicobacteraceae</taxon>
        <taxon>Helicobacter</taxon>
    </lineage>
</organism>
<name>NUOK_HELPG</name>
<comment type="function">
    <text evidence="1">NDH-1 shuttles electrons from NADH, via FMN and iron-sulfur (Fe-S) centers, to quinones in the respiratory chain. The immediate electron acceptor for the enzyme in this species is believed to be ubiquinone. Couples the redox reaction to proton translocation (for every two electrons transferred, four hydrogen ions are translocated across the cytoplasmic membrane), and thus conserves the redox energy in a proton gradient.</text>
</comment>
<comment type="catalytic activity">
    <reaction evidence="1">
        <text>a quinone + NADH + 5 H(+)(in) = a quinol + NAD(+) + 4 H(+)(out)</text>
        <dbReference type="Rhea" id="RHEA:57888"/>
        <dbReference type="ChEBI" id="CHEBI:15378"/>
        <dbReference type="ChEBI" id="CHEBI:24646"/>
        <dbReference type="ChEBI" id="CHEBI:57540"/>
        <dbReference type="ChEBI" id="CHEBI:57945"/>
        <dbReference type="ChEBI" id="CHEBI:132124"/>
    </reaction>
</comment>
<comment type="subunit">
    <text evidence="1">NDH-1 is composed of 14 different subunits. Subunits NuoA, H, J, K, L, M, N constitute the membrane sector of the complex.</text>
</comment>
<comment type="subcellular location">
    <subcellularLocation>
        <location evidence="1">Cell inner membrane</location>
        <topology evidence="1">Multi-pass membrane protein</topology>
    </subcellularLocation>
</comment>
<comment type="similarity">
    <text evidence="1">Belongs to the complex I subunit 4L family.</text>
</comment>
<accession>B5Z8R5</accession>
<sequence length="100" mass="11023">MIGLNHYLIVSGLLFCIGLAGMLKRKNILLLFFSTEIMLNAINIGFIAISKYTHNLDGQMFALFIIAIAASEVAIGLGLVILWFKKYKSLDIDSLNAMKG</sequence>
<dbReference type="EC" id="7.1.1.-" evidence="1"/>
<dbReference type="EMBL" id="CP001173">
    <property type="protein sequence ID" value="ACI27964.1"/>
    <property type="molecule type" value="Genomic_DNA"/>
</dbReference>
<dbReference type="RefSeq" id="WP_000579754.1">
    <property type="nucleotide sequence ID" value="NC_011333.1"/>
</dbReference>
<dbReference type="SMR" id="B5Z8R5"/>
<dbReference type="KEGG" id="hpg:HPG27_1215"/>
<dbReference type="HOGENOM" id="CLU_144724_0_0_7"/>
<dbReference type="Proteomes" id="UP000001735">
    <property type="component" value="Chromosome"/>
</dbReference>
<dbReference type="GO" id="GO:0030964">
    <property type="term" value="C:NADH dehydrogenase complex"/>
    <property type="evidence" value="ECO:0007669"/>
    <property type="project" value="TreeGrafter"/>
</dbReference>
<dbReference type="GO" id="GO:0005886">
    <property type="term" value="C:plasma membrane"/>
    <property type="evidence" value="ECO:0007669"/>
    <property type="project" value="UniProtKB-SubCell"/>
</dbReference>
<dbReference type="GO" id="GO:0050136">
    <property type="term" value="F:NADH:ubiquinone reductase (non-electrogenic) activity"/>
    <property type="evidence" value="ECO:0007669"/>
    <property type="project" value="UniProtKB-UniRule"/>
</dbReference>
<dbReference type="GO" id="GO:0048038">
    <property type="term" value="F:quinone binding"/>
    <property type="evidence" value="ECO:0007669"/>
    <property type="project" value="UniProtKB-KW"/>
</dbReference>
<dbReference type="GO" id="GO:0042773">
    <property type="term" value="P:ATP synthesis coupled electron transport"/>
    <property type="evidence" value="ECO:0007669"/>
    <property type="project" value="InterPro"/>
</dbReference>
<dbReference type="FunFam" id="1.10.287.3510:FF:000001">
    <property type="entry name" value="NADH-quinone oxidoreductase subunit K"/>
    <property type="match status" value="1"/>
</dbReference>
<dbReference type="Gene3D" id="1.10.287.3510">
    <property type="match status" value="1"/>
</dbReference>
<dbReference type="HAMAP" id="MF_01456">
    <property type="entry name" value="NDH1_NuoK"/>
    <property type="match status" value="1"/>
</dbReference>
<dbReference type="InterPro" id="IPR001133">
    <property type="entry name" value="NADH_UbQ_OxRdtase_chain4L/K"/>
</dbReference>
<dbReference type="InterPro" id="IPR039428">
    <property type="entry name" value="NUOK/Mnh_C1-like"/>
</dbReference>
<dbReference type="NCBIfam" id="NF004320">
    <property type="entry name" value="PRK05715.1-2"/>
    <property type="match status" value="1"/>
</dbReference>
<dbReference type="NCBIfam" id="NF004321">
    <property type="entry name" value="PRK05715.1-3"/>
    <property type="match status" value="1"/>
</dbReference>
<dbReference type="NCBIfam" id="NF004323">
    <property type="entry name" value="PRK05715.1-5"/>
    <property type="match status" value="1"/>
</dbReference>
<dbReference type="PANTHER" id="PTHR11434:SF21">
    <property type="entry name" value="NADH DEHYDROGENASE SUBUNIT 4L-RELATED"/>
    <property type="match status" value="1"/>
</dbReference>
<dbReference type="PANTHER" id="PTHR11434">
    <property type="entry name" value="NADH-UBIQUINONE OXIDOREDUCTASE SUBUNIT ND4L"/>
    <property type="match status" value="1"/>
</dbReference>
<dbReference type="Pfam" id="PF00420">
    <property type="entry name" value="Oxidored_q2"/>
    <property type="match status" value="1"/>
</dbReference>